<evidence type="ECO:0000305" key="1"/>
<accession>Q5UPG3</accession>
<gene>
    <name type="ordered locus">MIMI_R83</name>
</gene>
<keyword id="KW-1185">Reference proteome</keyword>
<feature type="chain" id="PRO_0000071205" description="Uncharacterized protein R83">
    <location>
        <begin position="1"/>
        <end position="133"/>
    </location>
</feature>
<dbReference type="EMBL" id="AY653733">
    <property type="protein sequence ID" value="AAV50358.1"/>
    <property type="molecule type" value="Genomic_DNA"/>
</dbReference>
<dbReference type="KEGG" id="vg:9924680"/>
<dbReference type="Proteomes" id="UP000001134">
    <property type="component" value="Genome"/>
</dbReference>
<proteinExistence type="inferred from homology"/>
<name>YR083_MIMIV</name>
<reference key="1">
    <citation type="journal article" date="2004" name="Science">
        <title>The 1.2-megabase genome sequence of Mimivirus.</title>
        <authorList>
            <person name="Raoult D."/>
            <person name="Audic S."/>
            <person name="Robert C."/>
            <person name="Abergel C."/>
            <person name="Renesto P."/>
            <person name="Ogata H."/>
            <person name="La Scola B."/>
            <person name="Susan M."/>
            <person name="Claverie J.-M."/>
        </authorList>
    </citation>
    <scope>NUCLEOTIDE SEQUENCE [LARGE SCALE GENOMIC DNA]</scope>
    <source>
        <strain>Rowbotham-Bradford</strain>
    </source>
</reference>
<protein>
    <recommendedName>
        <fullName>Uncharacterized protein R83</fullName>
    </recommendedName>
</protein>
<organismHost>
    <name type="scientific">Acanthamoeba polyphaga</name>
    <name type="common">Amoeba</name>
    <dbReference type="NCBI Taxonomy" id="5757"/>
</organismHost>
<organism>
    <name type="scientific">Acanthamoeba polyphaga mimivirus</name>
    <name type="common">APMV</name>
    <dbReference type="NCBI Taxonomy" id="212035"/>
    <lineage>
        <taxon>Viruses</taxon>
        <taxon>Varidnaviria</taxon>
        <taxon>Bamfordvirae</taxon>
        <taxon>Nucleocytoviricota</taxon>
        <taxon>Megaviricetes</taxon>
        <taxon>Imitervirales</taxon>
        <taxon>Mimiviridae</taxon>
        <taxon>Megamimivirinae</taxon>
        <taxon>Mimivirus</taxon>
        <taxon>Mimivirus bradfordmassiliense</taxon>
    </lineage>
</organism>
<sequence>MSTVKFTVVEPTIFSNVSISFKEDKIILFLESKVIGTLYQTSGNILWESECPITRSSYKELSHWMKCYDCGRDFCVPKNCDYHDQIPKSIYRESVLNKYTLTIKWTNYCSLESAITKTIQVYIDLNKIETNTN</sequence>
<comment type="similarity">
    <text evidence="1">Belongs to the mimivirus L15/L51/R83 family.</text>
</comment>